<dbReference type="EC" id="2.7.7.8" evidence="1"/>
<dbReference type="EMBL" id="CP001339">
    <property type="protein sequence ID" value="ACL72095.1"/>
    <property type="molecule type" value="Genomic_DNA"/>
</dbReference>
<dbReference type="RefSeq" id="WP_012637579.1">
    <property type="nucleotide sequence ID" value="NC_011901.1"/>
</dbReference>
<dbReference type="SMR" id="B8GP06"/>
<dbReference type="STRING" id="396588.Tgr7_1007"/>
<dbReference type="KEGG" id="tgr:Tgr7_1007"/>
<dbReference type="eggNOG" id="COG1185">
    <property type="taxonomic scope" value="Bacteria"/>
</dbReference>
<dbReference type="HOGENOM" id="CLU_004217_2_2_6"/>
<dbReference type="OrthoDB" id="9804305at2"/>
<dbReference type="Proteomes" id="UP000002383">
    <property type="component" value="Chromosome"/>
</dbReference>
<dbReference type="GO" id="GO:0005829">
    <property type="term" value="C:cytosol"/>
    <property type="evidence" value="ECO:0007669"/>
    <property type="project" value="TreeGrafter"/>
</dbReference>
<dbReference type="GO" id="GO:0000175">
    <property type="term" value="F:3'-5'-RNA exonuclease activity"/>
    <property type="evidence" value="ECO:0007669"/>
    <property type="project" value="TreeGrafter"/>
</dbReference>
<dbReference type="GO" id="GO:0000287">
    <property type="term" value="F:magnesium ion binding"/>
    <property type="evidence" value="ECO:0007669"/>
    <property type="project" value="UniProtKB-UniRule"/>
</dbReference>
<dbReference type="GO" id="GO:0004654">
    <property type="term" value="F:polyribonucleotide nucleotidyltransferase activity"/>
    <property type="evidence" value="ECO:0007669"/>
    <property type="project" value="UniProtKB-UniRule"/>
</dbReference>
<dbReference type="GO" id="GO:0003723">
    <property type="term" value="F:RNA binding"/>
    <property type="evidence" value="ECO:0007669"/>
    <property type="project" value="UniProtKB-UniRule"/>
</dbReference>
<dbReference type="GO" id="GO:0006402">
    <property type="term" value="P:mRNA catabolic process"/>
    <property type="evidence" value="ECO:0007669"/>
    <property type="project" value="UniProtKB-UniRule"/>
</dbReference>
<dbReference type="GO" id="GO:0006396">
    <property type="term" value="P:RNA processing"/>
    <property type="evidence" value="ECO:0007669"/>
    <property type="project" value="InterPro"/>
</dbReference>
<dbReference type="CDD" id="cd02393">
    <property type="entry name" value="KH-I_PNPase"/>
    <property type="match status" value="1"/>
</dbReference>
<dbReference type="CDD" id="cd11363">
    <property type="entry name" value="RNase_PH_PNPase_1"/>
    <property type="match status" value="1"/>
</dbReference>
<dbReference type="CDD" id="cd11364">
    <property type="entry name" value="RNase_PH_PNPase_2"/>
    <property type="match status" value="1"/>
</dbReference>
<dbReference type="CDD" id="cd04472">
    <property type="entry name" value="S1_PNPase"/>
    <property type="match status" value="1"/>
</dbReference>
<dbReference type="FunFam" id="2.40.50.140:FF:000023">
    <property type="entry name" value="Polyribonucleotide nucleotidyltransferase"/>
    <property type="match status" value="1"/>
</dbReference>
<dbReference type="FunFam" id="3.30.1370.10:FF:000001">
    <property type="entry name" value="Polyribonucleotide nucleotidyltransferase"/>
    <property type="match status" value="1"/>
</dbReference>
<dbReference type="FunFam" id="3.30.230.70:FF:000001">
    <property type="entry name" value="Polyribonucleotide nucleotidyltransferase"/>
    <property type="match status" value="1"/>
</dbReference>
<dbReference type="FunFam" id="3.30.230.70:FF:000002">
    <property type="entry name" value="Polyribonucleotide nucleotidyltransferase"/>
    <property type="match status" value="1"/>
</dbReference>
<dbReference type="Gene3D" id="3.30.230.70">
    <property type="entry name" value="GHMP Kinase, N-terminal domain"/>
    <property type="match status" value="2"/>
</dbReference>
<dbReference type="Gene3D" id="3.30.1370.10">
    <property type="entry name" value="K Homology domain, type 1"/>
    <property type="match status" value="1"/>
</dbReference>
<dbReference type="Gene3D" id="2.40.50.140">
    <property type="entry name" value="Nucleic acid-binding proteins"/>
    <property type="match status" value="1"/>
</dbReference>
<dbReference type="HAMAP" id="MF_01595">
    <property type="entry name" value="PNPase"/>
    <property type="match status" value="1"/>
</dbReference>
<dbReference type="InterPro" id="IPR001247">
    <property type="entry name" value="ExoRNase_PH_dom1"/>
</dbReference>
<dbReference type="InterPro" id="IPR015847">
    <property type="entry name" value="ExoRNase_PH_dom2"/>
</dbReference>
<dbReference type="InterPro" id="IPR036345">
    <property type="entry name" value="ExoRNase_PH_dom2_sf"/>
</dbReference>
<dbReference type="InterPro" id="IPR004087">
    <property type="entry name" value="KH_dom"/>
</dbReference>
<dbReference type="InterPro" id="IPR004088">
    <property type="entry name" value="KH_dom_type_1"/>
</dbReference>
<dbReference type="InterPro" id="IPR036612">
    <property type="entry name" value="KH_dom_type_1_sf"/>
</dbReference>
<dbReference type="InterPro" id="IPR012340">
    <property type="entry name" value="NA-bd_OB-fold"/>
</dbReference>
<dbReference type="InterPro" id="IPR012162">
    <property type="entry name" value="PNPase"/>
</dbReference>
<dbReference type="InterPro" id="IPR027408">
    <property type="entry name" value="PNPase/RNase_PH_dom_sf"/>
</dbReference>
<dbReference type="InterPro" id="IPR015848">
    <property type="entry name" value="PNPase_PH_RNA-bd_bac/org-type"/>
</dbReference>
<dbReference type="InterPro" id="IPR020568">
    <property type="entry name" value="Ribosomal_Su5_D2-typ_SF"/>
</dbReference>
<dbReference type="InterPro" id="IPR003029">
    <property type="entry name" value="S1_domain"/>
</dbReference>
<dbReference type="NCBIfam" id="TIGR03591">
    <property type="entry name" value="polynuc_phos"/>
    <property type="match status" value="1"/>
</dbReference>
<dbReference type="NCBIfam" id="NF008805">
    <property type="entry name" value="PRK11824.1"/>
    <property type="match status" value="1"/>
</dbReference>
<dbReference type="PANTHER" id="PTHR11252">
    <property type="entry name" value="POLYRIBONUCLEOTIDE NUCLEOTIDYLTRANSFERASE"/>
    <property type="match status" value="1"/>
</dbReference>
<dbReference type="PANTHER" id="PTHR11252:SF0">
    <property type="entry name" value="POLYRIBONUCLEOTIDE NUCLEOTIDYLTRANSFERASE 1, MITOCHONDRIAL"/>
    <property type="match status" value="1"/>
</dbReference>
<dbReference type="Pfam" id="PF00013">
    <property type="entry name" value="KH_1"/>
    <property type="match status" value="1"/>
</dbReference>
<dbReference type="Pfam" id="PF03726">
    <property type="entry name" value="PNPase"/>
    <property type="match status" value="1"/>
</dbReference>
<dbReference type="Pfam" id="PF01138">
    <property type="entry name" value="RNase_PH"/>
    <property type="match status" value="2"/>
</dbReference>
<dbReference type="Pfam" id="PF03725">
    <property type="entry name" value="RNase_PH_C"/>
    <property type="match status" value="2"/>
</dbReference>
<dbReference type="Pfam" id="PF00575">
    <property type="entry name" value="S1"/>
    <property type="match status" value="1"/>
</dbReference>
<dbReference type="PIRSF" id="PIRSF005499">
    <property type="entry name" value="PNPase"/>
    <property type="match status" value="1"/>
</dbReference>
<dbReference type="SMART" id="SM00322">
    <property type="entry name" value="KH"/>
    <property type="match status" value="1"/>
</dbReference>
<dbReference type="SMART" id="SM00316">
    <property type="entry name" value="S1"/>
    <property type="match status" value="1"/>
</dbReference>
<dbReference type="SUPFAM" id="SSF54791">
    <property type="entry name" value="Eukaryotic type KH-domain (KH-domain type I)"/>
    <property type="match status" value="1"/>
</dbReference>
<dbReference type="SUPFAM" id="SSF50249">
    <property type="entry name" value="Nucleic acid-binding proteins"/>
    <property type="match status" value="1"/>
</dbReference>
<dbReference type="SUPFAM" id="SSF55666">
    <property type="entry name" value="Ribonuclease PH domain 2-like"/>
    <property type="match status" value="2"/>
</dbReference>
<dbReference type="SUPFAM" id="SSF54211">
    <property type="entry name" value="Ribosomal protein S5 domain 2-like"/>
    <property type="match status" value="2"/>
</dbReference>
<dbReference type="PROSITE" id="PS50084">
    <property type="entry name" value="KH_TYPE_1"/>
    <property type="match status" value="1"/>
</dbReference>
<dbReference type="PROSITE" id="PS50126">
    <property type="entry name" value="S1"/>
    <property type="match status" value="1"/>
</dbReference>
<keyword id="KW-0963">Cytoplasm</keyword>
<keyword id="KW-0460">Magnesium</keyword>
<keyword id="KW-0479">Metal-binding</keyword>
<keyword id="KW-0548">Nucleotidyltransferase</keyword>
<keyword id="KW-1185">Reference proteome</keyword>
<keyword id="KW-0694">RNA-binding</keyword>
<keyword id="KW-0808">Transferase</keyword>
<gene>
    <name evidence="1" type="primary">pnp</name>
    <name type="ordered locus">Tgr7_1007</name>
</gene>
<reference key="1">
    <citation type="journal article" date="2011" name="Stand. Genomic Sci.">
        <title>Complete genome sequence of 'Thioalkalivibrio sulfidophilus' HL-EbGr7.</title>
        <authorList>
            <person name="Muyzer G."/>
            <person name="Sorokin D.Y."/>
            <person name="Mavromatis K."/>
            <person name="Lapidus A."/>
            <person name="Clum A."/>
            <person name="Ivanova N."/>
            <person name="Pati A."/>
            <person name="d'Haeseleer P."/>
            <person name="Woyke T."/>
            <person name="Kyrpides N.C."/>
        </authorList>
    </citation>
    <scope>NUCLEOTIDE SEQUENCE [LARGE SCALE GENOMIC DNA]</scope>
    <source>
        <strain>HL-EbGR7</strain>
    </source>
</reference>
<feature type="chain" id="PRO_1000185760" description="Polyribonucleotide nucleotidyltransferase">
    <location>
        <begin position="1"/>
        <end position="693"/>
    </location>
</feature>
<feature type="domain" description="KH" evidence="1">
    <location>
        <begin position="553"/>
        <end position="612"/>
    </location>
</feature>
<feature type="domain" description="S1 motif" evidence="1">
    <location>
        <begin position="622"/>
        <end position="690"/>
    </location>
</feature>
<feature type="binding site" evidence="1">
    <location>
        <position position="486"/>
    </location>
    <ligand>
        <name>Mg(2+)</name>
        <dbReference type="ChEBI" id="CHEBI:18420"/>
    </ligand>
</feature>
<feature type="binding site" evidence="1">
    <location>
        <position position="492"/>
    </location>
    <ligand>
        <name>Mg(2+)</name>
        <dbReference type="ChEBI" id="CHEBI:18420"/>
    </ligand>
</feature>
<organism>
    <name type="scientific">Thioalkalivibrio sulfidiphilus (strain HL-EbGR7)</name>
    <dbReference type="NCBI Taxonomy" id="396588"/>
    <lineage>
        <taxon>Bacteria</taxon>
        <taxon>Pseudomonadati</taxon>
        <taxon>Pseudomonadota</taxon>
        <taxon>Gammaproteobacteria</taxon>
        <taxon>Chromatiales</taxon>
        <taxon>Ectothiorhodospiraceae</taxon>
        <taxon>Thioalkalivibrio</taxon>
    </lineage>
</organism>
<proteinExistence type="inferred from homology"/>
<sequence>MTAIKKSFQYGQHTVTFETGEIARQASGAVLVNMADTVVLVTAVGLKDVAQGRDFFPLTVNYQERTYAAGRIPGGFFKREGRPTEKETLTSRLIDRPIRPLFPKGFMNEVQVIATVMSMNPEVDPDVPAMLGASAALALSGLPFKGPIGAARVGYLNGAYVLNPSMSELKHSDLDLVVAGTEKAVLMVESEAKLLSEEVMLGAVMYGHEQMQAAIKVINELAAEAGKPAWDWVAPEENVALKEAVAAACEAELTAAYQIAEKQARNQQVNALRDAVVAKLATGEEGAPSAEKVKGAFGALEKRIVRSRVLKGEPRIDGRDTRTVRPITVKTGVLPRTHGSALFTRGETQAIVVATLGTDRDAQLIEAIEGERRERFMLHYNFPPFCTGETGMVGSPKRREIGHGRLAKRGVQAVMPGEAECPYVLRVVSEITESNGSSSMASVCGTSLALMDAGVPLKAPVAGIAMGLIKEGDAFAVISDILGDEDHLGDMDFKVAGSKDGVSALQMDIKIDGITREIMEKALAQAKEGRLHILEKMNAVLSEPRTEVSAYAPRFTTLKIHPDKIRDVIGKGGATIRALTEETGTSIDISDDGTVKIASVDKAAGDEARRRIEELTADVEVGRIYEGRVVKIMDFGAFVTILPGRDGLVHISQISEERVESVSDRLTEGDLVKVKVLEVDKQGRIRLSMKEVG</sequence>
<evidence type="ECO:0000255" key="1">
    <source>
        <dbReference type="HAMAP-Rule" id="MF_01595"/>
    </source>
</evidence>
<accession>B8GP06</accession>
<protein>
    <recommendedName>
        <fullName evidence="1">Polyribonucleotide nucleotidyltransferase</fullName>
        <ecNumber evidence="1">2.7.7.8</ecNumber>
    </recommendedName>
    <alternativeName>
        <fullName evidence="1">Polynucleotide phosphorylase</fullName>
        <shortName evidence="1">PNPase</shortName>
    </alternativeName>
</protein>
<comment type="function">
    <text evidence="1">Involved in mRNA degradation. Catalyzes the phosphorolysis of single-stranded polyribonucleotides processively in the 3'- to 5'-direction.</text>
</comment>
<comment type="catalytic activity">
    <reaction evidence="1">
        <text>RNA(n+1) + phosphate = RNA(n) + a ribonucleoside 5'-diphosphate</text>
        <dbReference type="Rhea" id="RHEA:22096"/>
        <dbReference type="Rhea" id="RHEA-COMP:14527"/>
        <dbReference type="Rhea" id="RHEA-COMP:17342"/>
        <dbReference type="ChEBI" id="CHEBI:43474"/>
        <dbReference type="ChEBI" id="CHEBI:57930"/>
        <dbReference type="ChEBI" id="CHEBI:140395"/>
        <dbReference type="EC" id="2.7.7.8"/>
    </reaction>
</comment>
<comment type="cofactor">
    <cofactor evidence="1">
        <name>Mg(2+)</name>
        <dbReference type="ChEBI" id="CHEBI:18420"/>
    </cofactor>
</comment>
<comment type="subunit">
    <text evidence="1">Component of the RNA degradosome, which is a multiprotein complex involved in RNA processing and mRNA degradation.</text>
</comment>
<comment type="subcellular location">
    <subcellularLocation>
        <location evidence="1">Cytoplasm</location>
    </subcellularLocation>
</comment>
<comment type="similarity">
    <text evidence="1">Belongs to the polyribonucleotide nucleotidyltransferase family.</text>
</comment>
<name>PNP_THISH</name>